<keyword id="KW-0073">Auxin biosynthesis</keyword>
<keyword id="KW-0378">Hydrolase</keyword>
<protein>
    <recommendedName>
        <fullName>Indoleacetamide hydrolase</fullName>
        <shortName>IAH</shortName>
        <ecNumber>3.5.1.-</ecNumber>
    </recommendedName>
    <alternativeName>
        <fullName>Indole-3-acetamide hydrolase</fullName>
    </alternativeName>
</protein>
<sequence>MREMITLESLCRALADEQIAAEELRERALDTEARLTLLNCFIREGDAVSQFGEADQARKGTSLWGVPVSFKDNICVRGLPLTAGTRGMSGFIADQDAAIVSQLKALGAVVAGKNNMHELSFGVTSINPHWGAVGNPVAPGYCAGGSSGGSAAAVASGIVPLSVGTDTGGSIRIPAAFCGITGFRPTTGRLSTAGIIPVSHTKDCVGLLTRTAGDAEFVYGLLSGKQQSFPLNRTGPCRIGLPVSMWSDLDGEVERACINALSLLRKTGFEFVEIDDADIVELNQTLTFTVPLYEFFADFAQSLLSLGWKHGIHHIFAQVDDANVKGIINHHLGEGAIKPAHYLSSLQNGELLKRKMDELFARHHIKLLGYPTVPCRVPHLDHADRPEFFSQAIRNTDLASNAMLPSITIPVGPEGRLPVGLSFDAPRARDAFLLSNVSLIEKVLKG</sequence>
<gene>
    <name type="primary">iaaH</name>
</gene>
<accession>P52831</accession>
<reference key="1">
    <citation type="journal article" date="1994" name="J. Bacteriol.">
        <title>A mutation in the indole-3-acetic acid biosynthesis pathway of Pseudomonas syringae pv. syringae affects growth in Phaseolus vulgaris and syringomycin production.</title>
        <authorList>
            <person name="Mazzola M."/>
            <person name="White F.F."/>
        </authorList>
    </citation>
    <scope>NUCLEOTIDE SEQUENCE [GENOMIC DNA]</scope>
    <source>
        <strain>Y30</strain>
    </source>
</reference>
<evidence type="ECO:0000250" key="1"/>
<evidence type="ECO:0000305" key="2"/>
<proteinExistence type="inferred from homology"/>
<dbReference type="EC" id="3.5.1.-"/>
<dbReference type="EMBL" id="U04358">
    <property type="protein sequence ID" value="AAA17679.1"/>
    <property type="molecule type" value="Unassigned_DNA"/>
</dbReference>
<dbReference type="PIR" id="B53376">
    <property type="entry name" value="B53376"/>
</dbReference>
<dbReference type="SMR" id="P52831"/>
<dbReference type="UniPathway" id="UPA00151"/>
<dbReference type="GO" id="GO:0016787">
    <property type="term" value="F:hydrolase activity"/>
    <property type="evidence" value="ECO:0007669"/>
    <property type="project" value="UniProtKB-KW"/>
</dbReference>
<dbReference type="GO" id="GO:0009851">
    <property type="term" value="P:auxin biosynthetic process"/>
    <property type="evidence" value="ECO:0007669"/>
    <property type="project" value="UniProtKB-UniPathway"/>
</dbReference>
<dbReference type="Gene3D" id="3.90.1300.10">
    <property type="entry name" value="Amidase signature (AS) domain"/>
    <property type="match status" value="1"/>
</dbReference>
<dbReference type="InterPro" id="IPR000120">
    <property type="entry name" value="Amidase"/>
</dbReference>
<dbReference type="InterPro" id="IPR020556">
    <property type="entry name" value="Amidase_CS"/>
</dbReference>
<dbReference type="InterPro" id="IPR023631">
    <property type="entry name" value="Amidase_dom"/>
</dbReference>
<dbReference type="InterPro" id="IPR036928">
    <property type="entry name" value="AS_sf"/>
</dbReference>
<dbReference type="PANTHER" id="PTHR11895:SF151">
    <property type="entry name" value="GLUTAMYL-TRNA(GLN) AMIDOTRANSFERASE SUBUNIT A"/>
    <property type="match status" value="1"/>
</dbReference>
<dbReference type="PANTHER" id="PTHR11895">
    <property type="entry name" value="TRANSAMIDASE"/>
    <property type="match status" value="1"/>
</dbReference>
<dbReference type="Pfam" id="PF01425">
    <property type="entry name" value="Amidase"/>
    <property type="match status" value="1"/>
</dbReference>
<dbReference type="SUPFAM" id="SSF75304">
    <property type="entry name" value="Amidase signature (AS) enzymes"/>
    <property type="match status" value="1"/>
</dbReference>
<dbReference type="PROSITE" id="PS00571">
    <property type="entry name" value="AMIDASES"/>
    <property type="match status" value="1"/>
</dbReference>
<comment type="function">
    <text>Hydrolyzes indole-3-acetamide (IAM) into indole-3-acetic acid (IAA).</text>
</comment>
<comment type="pathway">
    <text>Plant hormone metabolism; auxin biosynthesis.</text>
</comment>
<comment type="similarity">
    <text evidence="2">Belongs to the amidase family.</text>
</comment>
<name>HYIN_PSESY</name>
<feature type="chain" id="PRO_0000105249" description="Indoleacetamide hydrolase">
    <location>
        <begin position="1"/>
        <end position="446"/>
    </location>
</feature>
<feature type="active site" description="Charge relay system" evidence="1">
    <location>
        <position position="71"/>
    </location>
</feature>
<feature type="active site" description="Charge relay system" evidence="1">
    <location>
        <position position="146"/>
    </location>
</feature>
<feature type="active site" description="Acyl-ester intermediate" evidence="1">
    <location>
        <position position="170"/>
    </location>
</feature>
<organism>
    <name type="scientific">Pseudomonas syringae pv. syringae</name>
    <dbReference type="NCBI Taxonomy" id="321"/>
    <lineage>
        <taxon>Bacteria</taxon>
        <taxon>Pseudomonadati</taxon>
        <taxon>Pseudomonadota</taxon>
        <taxon>Gammaproteobacteria</taxon>
        <taxon>Pseudomonadales</taxon>
        <taxon>Pseudomonadaceae</taxon>
        <taxon>Pseudomonas</taxon>
        <taxon>Pseudomonas syringae</taxon>
    </lineage>
</organism>